<keyword id="KW-1185">Reference proteome</keyword>
<keyword id="KW-0687">Ribonucleoprotein</keyword>
<keyword id="KW-0689">Ribosomal protein</keyword>
<keyword id="KW-0694">RNA-binding</keyword>
<keyword id="KW-0699">rRNA-binding</keyword>
<gene>
    <name evidence="1" type="primary">rpl24</name>
    <name type="ordered locus">Nmar_0799</name>
</gene>
<name>RL24_NITMS</name>
<protein>
    <recommendedName>
        <fullName evidence="1">Large ribosomal subunit protein uL24</fullName>
    </recommendedName>
    <alternativeName>
        <fullName evidence="3">50S ribosomal protein L24</fullName>
    </alternativeName>
</protein>
<accession>A9A5I4</accession>
<dbReference type="EMBL" id="CP000866">
    <property type="protein sequence ID" value="ABX12695.1"/>
    <property type="molecule type" value="Genomic_DNA"/>
</dbReference>
<dbReference type="RefSeq" id="WP_012215182.1">
    <property type="nucleotide sequence ID" value="NC_010085.1"/>
</dbReference>
<dbReference type="SMR" id="A9A5I4"/>
<dbReference type="FunCoup" id="A9A5I4">
    <property type="interactions" value="199"/>
</dbReference>
<dbReference type="STRING" id="436308.Nmar_0799"/>
<dbReference type="EnsemblBacteria" id="ABX12695">
    <property type="protein sequence ID" value="ABX12695"/>
    <property type="gene ID" value="Nmar_0799"/>
</dbReference>
<dbReference type="GeneID" id="5773782"/>
<dbReference type="KEGG" id="nmr:Nmar_0799"/>
<dbReference type="eggNOG" id="arCOG04094">
    <property type="taxonomic scope" value="Archaea"/>
</dbReference>
<dbReference type="HOGENOM" id="CLU_093240_2_0_2"/>
<dbReference type="InParanoid" id="A9A5I4"/>
<dbReference type="OrthoDB" id="10899at2157"/>
<dbReference type="PhylomeDB" id="A9A5I4"/>
<dbReference type="Proteomes" id="UP000000792">
    <property type="component" value="Chromosome"/>
</dbReference>
<dbReference type="GO" id="GO:0022625">
    <property type="term" value="C:cytosolic large ribosomal subunit"/>
    <property type="evidence" value="ECO:0000318"/>
    <property type="project" value="GO_Central"/>
</dbReference>
<dbReference type="GO" id="GO:0003723">
    <property type="term" value="F:RNA binding"/>
    <property type="evidence" value="ECO:0000318"/>
    <property type="project" value="GO_Central"/>
</dbReference>
<dbReference type="GO" id="GO:0019843">
    <property type="term" value="F:rRNA binding"/>
    <property type="evidence" value="ECO:0007669"/>
    <property type="project" value="UniProtKB-UniRule"/>
</dbReference>
<dbReference type="GO" id="GO:0003735">
    <property type="term" value="F:structural constituent of ribosome"/>
    <property type="evidence" value="ECO:0000318"/>
    <property type="project" value="GO_Central"/>
</dbReference>
<dbReference type="GO" id="GO:0002181">
    <property type="term" value="P:cytoplasmic translation"/>
    <property type="evidence" value="ECO:0000318"/>
    <property type="project" value="GO_Central"/>
</dbReference>
<dbReference type="GO" id="GO:0042273">
    <property type="term" value="P:ribosomal large subunit biogenesis"/>
    <property type="evidence" value="ECO:0000318"/>
    <property type="project" value="GO_Central"/>
</dbReference>
<dbReference type="CDD" id="cd06089">
    <property type="entry name" value="KOW_RPL26"/>
    <property type="match status" value="1"/>
</dbReference>
<dbReference type="FunFam" id="2.30.30.30:FF:000108">
    <property type="entry name" value="50S ribosomal protein L24"/>
    <property type="match status" value="1"/>
</dbReference>
<dbReference type="Gene3D" id="2.30.30.30">
    <property type="match status" value="1"/>
</dbReference>
<dbReference type="HAMAP" id="MF_01326_A">
    <property type="entry name" value="Ribosomal_uL24_A"/>
    <property type="match status" value="1"/>
</dbReference>
<dbReference type="InterPro" id="IPR014722">
    <property type="entry name" value="Rib_uL2_dom2"/>
</dbReference>
<dbReference type="InterPro" id="IPR005825">
    <property type="entry name" value="Ribosomal_uL24_CS"/>
</dbReference>
<dbReference type="InterPro" id="IPR005756">
    <property type="entry name" value="Ribosomal_uL24_euk/arc"/>
</dbReference>
<dbReference type="InterPro" id="IPR041988">
    <property type="entry name" value="Ribosomal_uL24_KOW"/>
</dbReference>
<dbReference type="InterPro" id="IPR008991">
    <property type="entry name" value="Translation_prot_SH3-like_sf"/>
</dbReference>
<dbReference type="NCBIfam" id="TIGR01080">
    <property type="entry name" value="rplX_A_E"/>
    <property type="match status" value="1"/>
</dbReference>
<dbReference type="PANTHER" id="PTHR11143">
    <property type="entry name" value="60S RIBOSOMAL PROTEIN L26 FAMILY MEMBER"/>
    <property type="match status" value="1"/>
</dbReference>
<dbReference type="Pfam" id="PF16906">
    <property type="entry name" value="Ribosomal_L26"/>
    <property type="match status" value="1"/>
</dbReference>
<dbReference type="SUPFAM" id="SSF50104">
    <property type="entry name" value="Translation proteins SH3-like domain"/>
    <property type="match status" value="1"/>
</dbReference>
<dbReference type="PROSITE" id="PS01108">
    <property type="entry name" value="RIBOSOMAL_L24"/>
    <property type="match status" value="1"/>
</dbReference>
<sequence>MKPTKMRNKMIYRASYQTKSKQLGSALSKDLQKKYGKRSVRVNEGDSVTILRGEFKGVDGKVAEVSTAKSSVAIEGVKKEKTKGDKFDVFIHTSNLLVTSLNTEDKWRIAKLEGKDPRKQPKEAPKAAEKPAKEEPKKETPKAEEKPAKEEPKETKVEKKSEEKEDEN</sequence>
<reference key="1">
    <citation type="journal article" date="2010" name="Proc. Natl. Acad. Sci. U.S.A.">
        <title>Nitrosopumilus maritimus genome reveals unique mechanisms for nitrification and autotrophy in globally distributed marine crenarchaea.</title>
        <authorList>
            <person name="Walker C.B."/>
            <person name="de la Torre J.R."/>
            <person name="Klotz M.G."/>
            <person name="Urakawa H."/>
            <person name="Pinel N."/>
            <person name="Arp D.J."/>
            <person name="Brochier-Armanet C."/>
            <person name="Chain P.S."/>
            <person name="Chan P.P."/>
            <person name="Gollabgir A."/>
            <person name="Hemp J."/>
            <person name="Hugler M."/>
            <person name="Karr E.A."/>
            <person name="Konneke M."/>
            <person name="Shin M."/>
            <person name="Lawton T.J."/>
            <person name="Lowe T."/>
            <person name="Martens-Habbena W."/>
            <person name="Sayavedra-Soto L.A."/>
            <person name="Lang D."/>
            <person name="Sievert S.M."/>
            <person name="Rosenzweig A.C."/>
            <person name="Manning G."/>
            <person name="Stahl D.A."/>
        </authorList>
    </citation>
    <scope>NUCLEOTIDE SEQUENCE [LARGE SCALE GENOMIC DNA]</scope>
    <source>
        <strain>SCM1</strain>
    </source>
</reference>
<proteinExistence type="inferred from homology"/>
<comment type="function">
    <text evidence="1">One of two assembly initiator proteins, it binds directly to the 5'-end of the 23S rRNA, where it nucleates assembly of the 50S subunit.</text>
</comment>
<comment type="function">
    <text evidence="1">Located at the polypeptide exit tunnel on the outside of the subunit.</text>
</comment>
<comment type="subunit">
    <text evidence="1">Part of the 50S ribosomal subunit.</text>
</comment>
<comment type="similarity">
    <text evidence="1">Belongs to the universal ribosomal protein uL24 family.</text>
</comment>
<organism>
    <name type="scientific">Nitrosopumilus maritimus (strain SCM1)</name>
    <dbReference type="NCBI Taxonomy" id="436308"/>
    <lineage>
        <taxon>Archaea</taxon>
        <taxon>Nitrososphaerota</taxon>
        <taxon>Nitrososphaeria</taxon>
        <taxon>Nitrosopumilales</taxon>
        <taxon>Nitrosopumilaceae</taxon>
        <taxon>Nitrosopumilus</taxon>
    </lineage>
</organism>
<evidence type="ECO:0000255" key="1">
    <source>
        <dbReference type="HAMAP-Rule" id="MF_01326"/>
    </source>
</evidence>
<evidence type="ECO:0000256" key="2">
    <source>
        <dbReference type="SAM" id="MobiDB-lite"/>
    </source>
</evidence>
<evidence type="ECO:0000305" key="3"/>
<feature type="chain" id="PRO_0000355737" description="Large ribosomal subunit protein uL24">
    <location>
        <begin position="1"/>
        <end position="168"/>
    </location>
</feature>
<feature type="region of interest" description="Disordered" evidence="2">
    <location>
        <begin position="112"/>
        <end position="168"/>
    </location>
</feature>